<sequence>MGRIIRVTGPLVVADGMKGSKMYEVVRVGEMGLIGEIIRLEGDKAVIQVYEETAGIRPGEPVEGTGSSLSVELGPGLLTSMYDGIQRPLEKLRELSGDFIARGLTAPALPRDKKWHFTPTVKVGDKVTGGDILGVVPETSIIEHKILVPPWVEGEIVEIAEEGDYTVEEVIAKVKKPDGSIEELKMYHKWPVRVKRPYKNKLPPEVPLITGQRTIDTFFSIAKGGTAAIPGPFGSGKTVTQHQLAKWSDAQVVVYIGCGERGNEMTDVLEEFPKLKDPKTGKPLMERTVLIANTSNMPVAAREASIYTGITIAEYFRDQGYDVALMADSTSRWAEALREISGRLEEMPGEEGYPAYLASKIAEFYERAGRVVTLGSEPRVGSVSVIGAVSPPGGDFSEPVVQNTLRVVKVFWALDADLARRRHFPAINWLRSYSLYLDSIQDWWHKNVDPEWRKMRDTAMALLQKEAELQEIVRIVGPDALPDREKAILIVTRMLREDYLQQDAFDEVDTYCPPKKQVTMMRVILNFYERTMEAVDRGVPVDEIAKLPVREKIGRMKFEPDIEKIRALIDETNEQFEELFKKYGA</sequence>
<name>AATA_DESSY</name>
<keyword id="KW-0066">ATP synthesis</keyword>
<keyword id="KW-0067">ATP-binding</keyword>
<keyword id="KW-1003">Cell membrane</keyword>
<keyword id="KW-0375">Hydrogen ion transport</keyword>
<keyword id="KW-0406">Ion transport</keyword>
<keyword id="KW-0472">Membrane</keyword>
<keyword id="KW-0547">Nucleotide-binding</keyword>
<keyword id="KW-1278">Translocase</keyword>
<keyword id="KW-0813">Transport</keyword>
<organism>
    <name type="scientific">Desulfurococcus sp. (strain SY)</name>
    <dbReference type="NCBI Taxonomy" id="59822"/>
    <lineage>
        <taxon>Archaea</taxon>
        <taxon>Thermoproteota</taxon>
        <taxon>Thermoprotei</taxon>
        <taxon>Desulfurococcales</taxon>
        <taxon>Desulfurococcaceae</taxon>
        <taxon>Desulfurococcus</taxon>
    </lineage>
</organism>
<comment type="function">
    <text evidence="1 3">Component of the A-type ATP synthase that produces ATP from ADP in the presence of a proton gradient across the membrane. The A chain is the catalytic subunit (Probable).</text>
</comment>
<comment type="catalytic activity">
    <reaction evidence="1">
        <text>ATP + H2O + 4 H(+)(in) = ADP + phosphate + 5 H(+)(out)</text>
        <dbReference type="Rhea" id="RHEA:57720"/>
        <dbReference type="ChEBI" id="CHEBI:15377"/>
        <dbReference type="ChEBI" id="CHEBI:15378"/>
        <dbReference type="ChEBI" id="CHEBI:30616"/>
        <dbReference type="ChEBI" id="CHEBI:43474"/>
        <dbReference type="ChEBI" id="CHEBI:456216"/>
        <dbReference type="EC" id="7.1.2.2"/>
    </reaction>
</comment>
<comment type="subunit">
    <text evidence="1">Has multiple subunits with at least A(3), B(3), C, D, E, F, H, I and proteolipid K(x).</text>
</comment>
<comment type="subcellular location">
    <subcellularLocation>
        <location evidence="1">Cell membrane</location>
        <topology evidence="1">Peripheral membrane protein</topology>
    </subcellularLocation>
</comment>
<comment type="similarity">
    <text evidence="1">Belongs to the ATPase alpha/beta chains family.</text>
</comment>
<proteinExistence type="inferred from homology"/>
<accession>O06504</accession>
<reference key="1">
    <citation type="journal article" date="1997" name="Biochem. Biophys. Res. Commun.">
        <title>The stabilizing residues and the functional domains in the hyperthermophilic V-ATPase of Desulfurococcus.</title>
        <authorList>
            <person name="Shibui H."/>
            <person name="Hamamoto T."/>
            <person name="Yohda M."/>
            <person name="Kagawa Y."/>
        </authorList>
    </citation>
    <scope>NUCLEOTIDE SEQUENCE [GENOMIC DNA]</scope>
    <scope>FUNCTION</scope>
    <source>
        <strain>SY</strain>
    </source>
</reference>
<evidence type="ECO:0000255" key="1">
    <source>
        <dbReference type="HAMAP-Rule" id="MF_00309"/>
    </source>
</evidence>
<evidence type="ECO:0000303" key="2">
    <source>
    </source>
</evidence>
<evidence type="ECO:0000305" key="3">
    <source>
    </source>
</evidence>
<dbReference type="EC" id="7.1.2.2" evidence="1"/>
<dbReference type="EMBL" id="U96487">
    <property type="protein sequence ID" value="AAB64416.1"/>
    <property type="molecule type" value="Genomic_DNA"/>
</dbReference>
<dbReference type="PIR" id="T44674">
    <property type="entry name" value="T44674"/>
</dbReference>
<dbReference type="SMR" id="O06504"/>
<dbReference type="GO" id="GO:0005886">
    <property type="term" value="C:plasma membrane"/>
    <property type="evidence" value="ECO:0007669"/>
    <property type="project" value="UniProtKB-SubCell"/>
</dbReference>
<dbReference type="GO" id="GO:0033178">
    <property type="term" value="C:proton-transporting two-sector ATPase complex, catalytic domain"/>
    <property type="evidence" value="ECO:0007669"/>
    <property type="project" value="InterPro"/>
</dbReference>
<dbReference type="GO" id="GO:0005524">
    <property type="term" value="F:ATP binding"/>
    <property type="evidence" value="ECO:0007669"/>
    <property type="project" value="UniProtKB-UniRule"/>
</dbReference>
<dbReference type="GO" id="GO:0016887">
    <property type="term" value="F:ATP hydrolysis activity"/>
    <property type="evidence" value="ECO:0007669"/>
    <property type="project" value="InterPro"/>
</dbReference>
<dbReference type="GO" id="GO:0046933">
    <property type="term" value="F:proton-transporting ATP synthase activity, rotational mechanism"/>
    <property type="evidence" value="ECO:0007669"/>
    <property type="project" value="UniProtKB-UniRule"/>
</dbReference>
<dbReference type="GO" id="GO:0046961">
    <property type="term" value="F:proton-transporting ATPase activity, rotational mechanism"/>
    <property type="evidence" value="ECO:0007669"/>
    <property type="project" value="InterPro"/>
</dbReference>
<dbReference type="GO" id="GO:0042777">
    <property type="term" value="P:proton motive force-driven plasma membrane ATP synthesis"/>
    <property type="evidence" value="ECO:0007669"/>
    <property type="project" value="UniProtKB-UniRule"/>
</dbReference>
<dbReference type="CDD" id="cd18111">
    <property type="entry name" value="ATP-synt_V_A-type_alpha_C"/>
    <property type="match status" value="1"/>
</dbReference>
<dbReference type="CDD" id="cd18119">
    <property type="entry name" value="ATP-synt_V_A-type_alpha_N"/>
    <property type="match status" value="1"/>
</dbReference>
<dbReference type="CDD" id="cd01134">
    <property type="entry name" value="V_A-ATPase_A"/>
    <property type="match status" value="1"/>
</dbReference>
<dbReference type="FunFam" id="3.40.50.300:FF:000675">
    <property type="entry name" value="V-type ATP synthase alpha chain"/>
    <property type="match status" value="1"/>
</dbReference>
<dbReference type="FunFam" id="1.10.1140.10:FF:000002">
    <property type="entry name" value="V-type proton ATPase catalytic subunit A"/>
    <property type="match status" value="1"/>
</dbReference>
<dbReference type="FunFam" id="2.40.30.20:FF:000002">
    <property type="entry name" value="V-type proton ATPase catalytic subunit A"/>
    <property type="match status" value="1"/>
</dbReference>
<dbReference type="FunFam" id="2.40.50.100:FF:000008">
    <property type="entry name" value="V-type proton ATPase catalytic subunit A"/>
    <property type="match status" value="1"/>
</dbReference>
<dbReference type="Gene3D" id="2.40.30.20">
    <property type="match status" value="1"/>
</dbReference>
<dbReference type="Gene3D" id="2.40.50.100">
    <property type="match status" value="1"/>
</dbReference>
<dbReference type="Gene3D" id="1.10.1140.10">
    <property type="entry name" value="Bovine Mitochondrial F1-atpase, Atp Synthase Beta Chain, Chain D, domain 3"/>
    <property type="match status" value="1"/>
</dbReference>
<dbReference type="Gene3D" id="3.40.50.300">
    <property type="entry name" value="P-loop containing nucleotide triphosphate hydrolases"/>
    <property type="match status" value="1"/>
</dbReference>
<dbReference type="HAMAP" id="MF_00309">
    <property type="entry name" value="ATP_synth_A_arch"/>
    <property type="match status" value="1"/>
</dbReference>
<dbReference type="InterPro" id="IPR003593">
    <property type="entry name" value="AAA+_ATPase"/>
</dbReference>
<dbReference type="InterPro" id="IPR055190">
    <property type="entry name" value="ATP-synt_VA_C"/>
</dbReference>
<dbReference type="InterPro" id="IPR031686">
    <property type="entry name" value="ATP-synth_a_Xtn"/>
</dbReference>
<dbReference type="InterPro" id="IPR023366">
    <property type="entry name" value="ATP_synth_asu-like_sf"/>
</dbReference>
<dbReference type="InterPro" id="IPR005726">
    <property type="entry name" value="ATP_synth_asu_arc"/>
</dbReference>
<dbReference type="InterPro" id="IPR020003">
    <property type="entry name" value="ATPase_a/bsu_AS"/>
</dbReference>
<dbReference type="InterPro" id="IPR004100">
    <property type="entry name" value="ATPase_F1/V1/A1_a/bsu_N"/>
</dbReference>
<dbReference type="InterPro" id="IPR036121">
    <property type="entry name" value="ATPase_F1/V1/A1_a/bsu_N_sf"/>
</dbReference>
<dbReference type="InterPro" id="IPR000194">
    <property type="entry name" value="ATPase_F1/V1/A1_a/bsu_nucl-bd"/>
</dbReference>
<dbReference type="InterPro" id="IPR024034">
    <property type="entry name" value="ATPase_F1/V1_b/a_C"/>
</dbReference>
<dbReference type="InterPro" id="IPR027417">
    <property type="entry name" value="P-loop_NTPase"/>
</dbReference>
<dbReference type="InterPro" id="IPR022878">
    <property type="entry name" value="V-ATPase_asu"/>
</dbReference>
<dbReference type="NCBIfam" id="TIGR01043">
    <property type="entry name" value="ATP_syn_A_arch"/>
    <property type="match status" value="1"/>
</dbReference>
<dbReference type="NCBIfam" id="NF003220">
    <property type="entry name" value="PRK04192.1"/>
    <property type="match status" value="1"/>
</dbReference>
<dbReference type="PANTHER" id="PTHR43607:SF1">
    <property type="entry name" value="H(+)-TRANSPORTING TWO-SECTOR ATPASE"/>
    <property type="match status" value="1"/>
</dbReference>
<dbReference type="PANTHER" id="PTHR43607">
    <property type="entry name" value="V-TYPE PROTON ATPASE CATALYTIC SUBUNIT A"/>
    <property type="match status" value="1"/>
</dbReference>
<dbReference type="Pfam" id="PF00006">
    <property type="entry name" value="ATP-synt_ab"/>
    <property type="match status" value="1"/>
</dbReference>
<dbReference type="Pfam" id="PF02874">
    <property type="entry name" value="ATP-synt_ab_N"/>
    <property type="match status" value="1"/>
</dbReference>
<dbReference type="Pfam" id="PF16886">
    <property type="entry name" value="ATP-synt_ab_Xtn"/>
    <property type="match status" value="1"/>
</dbReference>
<dbReference type="Pfam" id="PF22919">
    <property type="entry name" value="ATP-synt_VA_C"/>
    <property type="match status" value="1"/>
</dbReference>
<dbReference type="SMART" id="SM00382">
    <property type="entry name" value="AAA"/>
    <property type="match status" value="1"/>
</dbReference>
<dbReference type="SUPFAM" id="SSF47917">
    <property type="entry name" value="C-terminal domain of alpha and beta subunits of F1 ATP synthase"/>
    <property type="match status" value="1"/>
</dbReference>
<dbReference type="SUPFAM" id="SSF50615">
    <property type="entry name" value="N-terminal domain of alpha and beta subunits of F1 ATP synthase"/>
    <property type="match status" value="1"/>
</dbReference>
<dbReference type="SUPFAM" id="SSF52540">
    <property type="entry name" value="P-loop containing nucleoside triphosphate hydrolases"/>
    <property type="match status" value="1"/>
</dbReference>
<dbReference type="PROSITE" id="PS00152">
    <property type="entry name" value="ATPASE_ALPHA_BETA"/>
    <property type="match status" value="1"/>
</dbReference>
<feature type="chain" id="PRO_0000144593" description="A-type ATP synthase subunit A">
    <location>
        <begin position="1"/>
        <end position="585"/>
    </location>
</feature>
<feature type="binding site" evidence="1">
    <location>
        <begin position="231"/>
        <end position="238"/>
    </location>
    <ligand>
        <name>ATP</name>
        <dbReference type="ChEBI" id="CHEBI:30616"/>
    </ligand>
</feature>
<gene>
    <name evidence="1 2" type="primary">atpA</name>
</gene>
<protein>
    <recommendedName>
        <fullName evidence="1">A-type ATP synthase subunit A</fullName>
        <ecNumber evidence="1">7.1.2.2</ecNumber>
    </recommendedName>
    <alternativeName>
        <fullName evidence="2">V-ATPase subunit A</fullName>
    </alternativeName>
</protein>